<sequence>MKGSKNQLLIAIVLASAYLIHCKQFVTVFYGIPAWRNASIPLFCATKNRDTWGTIQCLPDNDDYQEITLNVTEAFDAWNNTVTEQAVEDVWNLFETSIKPCVKLTPLCVAMNCTRNMTTWTGRTDTQNITIINDTSHARADNCTGLKEEEMIDCQFSMTGLERDKRKQYTEAWYSKDVVCDNNTSSQSKCYMNHCNTSVITESCDKHYWDAMRFRYCAPPGFALLRCNDTNYSGFAPNCSKVVAATCTRMMETQTSTWFGFNGTRAENRTYIYWHGKDNRTIISLNNFYNLTMHCKRPGNKTVLPITFMSGFKFHSQPVINKKPRQAWCWFEGQWKEAMQEVKETLAKHPRYKGNRSRTENIKFKAPGRGSDPEVTYMWTNCRGESLYCNMTWFLNWVENRTGQKQRNYAPCRIRQIINTWHRVGKNLYLPPREGELTCNSTVTSIIANIDAGDQTNITFSAEAAELYRLELGDYKLVEITPIGFAPTSVKRYSSAHQRHTRGVFVLGFLGFLATAGSAMGAASLTLSAQSRTLLAGIVQQQQQLLDVVKRQQEMLRLTVWGTKNLQARVTAIEKYLKDQAQLNSWGCAFRQVCHTSVPWVNDTLTPDWNNMTWQEWEQKVRYLEANISQSLEQAQIQQEKNMYELQKLNSWDVFTNWLDFTSWVRYIQYGVYVVVGIVALRIVIYIVQMLSRLRKGYRPVFSSPPGYIQQIHIHKDQEQPAREETEEDVGSNGGDRSWPWPIAYIHFLIRLLIRLLTGLYNICRDLLSRISPILQPIFQSLQRALTAIRDWLRLKAAYLQYGCEWIQEAFQALARTTRETLAGAGRDLWRALQRIGRGILAVPRRIRQGAELALL</sequence>
<organism>
    <name type="scientific">Human immunodeficiency virus type 2 subtype A (isolate NIH-Z)</name>
    <name type="common">HIV-2</name>
    <dbReference type="NCBI Taxonomy" id="11719"/>
    <lineage>
        <taxon>Viruses</taxon>
        <taxon>Riboviria</taxon>
        <taxon>Pararnavirae</taxon>
        <taxon>Artverviricota</taxon>
        <taxon>Revtraviricetes</taxon>
        <taxon>Ortervirales</taxon>
        <taxon>Retroviridae</taxon>
        <taxon>Orthoretrovirinae</taxon>
        <taxon>Lentivirus</taxon>
        <taxon>Human immunodeficiency virus 2</taxon>
    </lineage>
</organism>
<dbReference type="EMBL" id="J03654">
    <property type="protein sequence ID" value="AAB00761.1"/>
    <property type="molecule type" value="Genomic_DNA"/>
</dbReference>
<dbReference type="SMR" id="P05883"/>
<dbReference type="GlyCosmos" id="P05883">
    <property type="glycosylation" value="27 sites, No reported glycans"/>
</dbReference>
<dbReference type="Proteomes" id="UP000246679">
    <property type="component" value="Segment"/>
</dbReference>
<dbReference type="GO" id="GO:0044175">
    <property type="term" value="C:host cell endosome membrane"/>
    <property type="evidence" value="ECO:0007669"/>
    <property type="project" value="UniProtKB-SubCell"/>
</dbReference>
<dbReference type="GO" id="GO:0020002">
    <property type="term" value="C:host cell plasma membrane"/>
    <property type="evidence" value="ECO:0007669"/>
    <property type="project" value="UniProtKB-SubCell"/>
</dbReference>
<dbReference type="GO" id="GO:0016020">
    <property type="term" value="C:membrane"/>
    <property type="evidence" value="ECO:0007669"/>
    <property type="project" value="UniProtKB-KW"/>
</dbReference>
<dbReference type="GO" id="GO:0019031">
    <property type="term" value="C:viral envelope"/>
    <property type="evidence" value="ECO:0007669"/>
    <property type="project" value="UniProtKB-KW"/>
</dbReference>
<dbReference type="GO" id="GO:0055036">
    <property type="term" value="C:virion membrane"/>
    <property type="evidence" value="ECO:0007669"/>
    <property type="project" value="UniProtKB-SubCell"/>
</dbReference>
<dbReference type="GO" id="GO:0005198">
    <property type="term" value="F:structural molecule activity"/>
    <property type="evidence" value="ECO:0007669"/>
    <property type="project" value="InterPro"/>
</dbReference>
<dbReference type="GO" id="GO:0075512">
    <property type="term" value="P:clathrin-dependent endocytosis of virus by host cell"/>
    <property type="evidence" value="ECO:0007669"/>
    <property type="project" value="UniProtKB-KW"/>
</dbReference>
<dbReference type="GO" id="GO:0039654">
    <property type="term" value="P:fusion of virus membrane with host endosome membrane"/>
    <property type="evidence" value="ECO:0007669"/>
    <property type="project" value="UniProtKB-KW"/>
</dbReference>
<dbReference type="GO" id="GO:0052170">
    <property type="term" value="P:symbiont-mediated suppression of host innate immune response"/>
    <property type="evidence" value="ECO:0007669"/>
    <property type="project" value="UniProtKB-KW"/>
</dbReference>
<dbReference type="GO" id="GO:0039587">
    <property type="term" value="P:symbiont-mediated-mediated suppression of host tetherin activity"/>
    <property type="evidence" value="ECO:0007669"/>
    <property type="project" value="UniProtKB-KW"/>
</dbReference>
<dbReference type="GO" id="GO:0019062">
    <property type="term" value="P:virion attachment to host cell"/>
    <property type="evidence" value="ECO:0007669"/>
    <property type="project" value="UniProtKB-KW"/>
</dbReference>
<dbReference type="CDD" id="cd09909">
    <property type="entry name" value="HIV-1-like_HR1-HR2"/>
    <property type="match status" value="1"/>
</dbReference>
<dbReference type="Gene3D" id="1.10.287.210">
    <property type="match status" value="1"/>
</dbReference>
<dbReference type="Gene3D" id="2.170.40.20">
    <property type="entry name" value="Human immunodeficiency virus 1, Gp160, envelope glycoprotein"/>
    <property type="match status" value="2"/>
</dbReference>
<dbReference type="InterPro" id="IPR036377">
    <property type="entry name" value="Gp120_core_sf"/>
</dbReference>
<dbReference type="InterPro" id="IPR000328">
    <property type="entry name" value="GP41-like"/>
</dbReference>
<dbReference type="InterPro" id="IPR000777">
    <property type="entry name" value="HIV1_Gp120"/>
</dbReference>
<dbReference type="Pfam" id="PF00516">
    <property type="entry name" value="GP120"/>
    <property type="match status" value="1"/>
</dbReference>
<dbReference type="Pfam" id="PF00517">
    <property type="entry name" value="GP41"/>
    <property type="match status" value="1"/>
</dbReference>
<dbReference type="SUPFAM" id="SSF56502">
    <property type="entry name" value="gp120 core"/>
    <property type="match status" value="1"/>
</dbReference>
<dbReference type="SUPFAM" id="SSF58069">
    <property type="entry name" value="Virus ectodomain"/>
    <property type="match status" value="1"/>
</dbReference>
<protein>
    <recommendedName>
        <fullName>Envelope glycoprotein gp160</fullName>
    </recommendedName>
    <alternativeName>
        <fullName>Env polyprotein</fullName>
    </alternativeName>
    <component>
        <recommendedName>
            <fullName>Surface protein gp120</fullName>
            <shortName>SU</shortName>
        </recommendedName>
        <alternativeName>
            <fullName>Glycoprotein 120</fullName>
            <shortName>gp120</shortName>
        </alternativeName>
    </component>
    <component>
        <recommendedName>
            <fullName>Transmembrane protein gp41</fullName>
            <shortName>TM</shortName>
        </recommendedName>
        <alternativeName>
            <fullName>Glycoprotein 41</fullName>
            <shortName>gp41</shortName>
        </alternativeName>
    </component>
</protein>
<reference key="1">
    <citation type="journal article" date="1988" name="Proc. Natl. Acad. Sci. U.S.A.">
        <title>Genetic variability between isolates of human immunodeficiency virus (HIV) type 2 is comparable to the variability among HIV type 1.</title>
        <authorList>
            <person name="Zagury J.F."/>
            <person name="Franchini G."/>
            <person name="Reitz M.S. Jr."/>
            <person name="Collalti E."/>
            <person name="Starcich B.R."/>
            <person name="Hall L."/>
            <person name="Fargnoli K.A."/>
            <person name="Jagodzinski L.L."/>
            <person name="Guo H.-G."/>
            <person name="Laure F."/>
            <person name="Arya S.K."/>
            <person name="Josephs S.F."/>
            <person name="Zagury D."/>
            <person name="Wong-Staal F."/>
            <person name="Gallo R.C."/>
        </authorList>
    </citation>
    <scope>NUCLEOTIDE SEQUENCE [GENOMIC DNA]</scope>
</reference>
<reference key="2">
    <citation type="journal article" date="2003" name="J. Virol.">
        <title>Differential N-linked glycosylation of human immunodeficiency virus and Ebola virus envelope glycoproteins modulates interactions with DC-SIGN and DC-SIGNR.</title>
        <authorList>
            <person name="Lin G."/>
            <person name="Simmons G."/>
            <person name="Poehlmann S."/>
            <person name="Baribaud F."/>
            <person name="Ni H."/>
            <person name="Leslie G.J."/>
            <person name="Haggarty B.S."/>
            <person name="Bates P."/>
            <person name="Weissman D."/>
            <person name="Hoxie J.A."/>
            <person name="Doms R.W."/>
        </authorList>
    </citation>
    <scope>INTERACTION OF SURFACE PROTEIN GP120 WITH HOST CD209/DC-SIGN AND CLEC4M/DC-SIGNR</scope>
    <source>
        <strain>Isolate vcp</strain>
    </source>
</reference>
<reference key="3">
    <citation type="journal article" date="2002" name="J. Gen. Virol.">
        <title>Human immunodeficiency virus type 2.</title>
        <authorList>
            <person name="Reeves J.D."/>
            <person name="Doms R.W."/>
        </authorList>
    </citation>
    <scope>REVIEW</scope>
</reference>
<feature type="signal peptide" evidence="2">
    <location>
        <begin position="1"/>
        <end position="22"/>
    </location>
</feature>
<feature type="chain" id="PRO_0000239502" description="Envelope glycoprotein gp160">
    <location>
        <begin position="23"/>
        <end position="856"/>
    </location>
</feature>
<feature type="chain" id="PRO_0000038447" description="Surface protein gp120" evidence="1">
    <location>
        <begin position="23"/>
        <end position="502"/>
    </location>
</feature>
<feature type="chain" id="PRO_0000038448" description="Transmembrane protein gp41" evidence="1">
    <location>
        <begin position="503"/>
        <end position="856"/>
    </location>
</feature>
<feature type="topological domain" description="Extracellular" evidence="2">
    <location>
        <begin position="23"/>
        <end position="670"/>
    </location>
</feature>
<feature type="transmembrane region" description="Helical" evidence="2">
    <location>
        <begin position="671"/>
        <end position="691"/>
    </location>
</feature>
<feature type="topological domain" description="Cytoplasmic" evidence="2">
    <location>
        <begin position="692"/>
        <end position="856"/>
    </location>
</feature>
<feature type="region of interest" description="V1">
    <location>
        <begin position="113"/>
        <end position="153"/>
    </location>
</feature>
<feature type="region of interest" description="V2">
    <location>
        <begin position="154"/>
        <end position="195"/>
    </location>
</feature>
<feature type="region of interest" description="V3">
    <location>
        <begin position="295"/>
        <end position="328"/>
    </location>
</feature>
<feature type="region of interest" description="V4">
    <location>
        <begin position="389"/>
        <end position="412"/>
    </location>
</feature>
<feature type="region of interest" description="V5">
    <location>
        <begin position="455"/>
        <end position="460"/>
    </location>
</feature>
<feature type="region of interest" description="Fusion peptide" evidence="2">
    <location>
        <begin position="503"/>
        <end position="523"/>
    </location>
</feature>
<feature type="region of interest" description="Immunosuppression" evidence="1">
    <location>
        <begin position="566"/>
        <end position="582"/>
    </location>
</feature>
<feature type="region of interest" description="MPER; binding to GalCer" evidence="1">
    <location>
        <begin position="648"/>
        <end position="669"/>
    </location>
</feature>
<feature type="coiled-coil region" evidence="2">
    <location>
        <begin position="615"/>
        <end position="636"/>
    </location>
</feature>
<feature type="short sequence motif" description="YXXV motif; contains endocytosis signal" evidence="1">
    <location>
        <begin position="698"/>
        <end position="701"/>
    </location>
</feature>
<feature type="short sequence motif" description="Di-leucine internalization motif" evidence="1">
    <location>
        <begin position="855"/>
        <end position="856"/>
    </location>
</feature>
<feature type="site" description="Cleavage; by host furin" evidence="2">
    <location>
        <begin position="502" status="uncertain"/>
        <end position="503" status="uncertain"/>
    </location>
</feature>
<feature type="lipid moiety-binding region" description="S-palmitoyl cysteine; by host" evidence="1">
    <location>
        <position position="764"/>
    </location>
</feature>
<feature type="glycosylation site" description="N-linked (GlcNAc...) asparagine; by host" evidence="2">
    <location>
        <position position="37"/>
    </location>
</feature>
<feature type="glycosylation site" description="N-linked (GlcNAc...) asparagine; by host" evidence="2">
    <location>
        <position position="70"/>
    </location>
</feature>
<feature type="glycosylation site" description="N-linked (GlcNAc...) asparagine; by host" evidence="2">
    <location>
        <position position="79"/>
    </location>
</feature>
<feature type="glycosylation site" description="N-linked (GlcNAc...) asparagine; by host" evidence="2">
    <location>
        <position position="112"/>
    </location>
</feature>
<feature type="glycosylation site" description="N-linked (GlcNAc...) asparagine; by host" evidence="2">
    <location>
        <position position="116"/>
    </location>
</feature>
<feature type="glycosylation site" description="N-linked (GlcNAc...) asparagine; by host" evidence="2">
    <location>
        <position position="128"/>
    </location>
</feature>
<feature type="glycosylation site" description="N-linked (GlcNAc...) asparagine; by host" evidence="2">
    <location>
        <position position="133"/>
    </location>
</feature>
<feature type="glycosylation site" description="N-linked (GlcNAc...) asparagine; by host" evidence="2">
    <location>
        <position position="142"/>
    </location>
</feature>
<feature type="glycosylation site" description="N-linked (GlcNAc...) asparagine; by host" evidence="2">
    <location>
        <position position="182"/>
    </location>
</feature>
<feature type="glycosylation site" description="N-linked (GlcNAc...) asparagine; by host" evidence="2">
    <location>
        <position position="183"/>
    </location>
</feature>
<feature type="glycosylation site" description="N-linked (GlcNAc...) asparagine; by host" evidence="2">
    <location>
        <position position="196"/>
    </location>
</feature>
<feature type="glycosylation site" description="N-linked (GlcNAc...) asparagine; by host" evidence="2">
    <location>
        <position position="228"/>
    </location>
</feature>
<feature type="glycosylation site" description="N-linked (GlcNAc...) asparagine; by host" evidence="2">
    <location>
        <position position="231"/>
    </location>
</feature>
<feature type="glycosylation site" description="N-linked (GlcNAc...) asparagine; by host" evidence="2">
    <location>
        <position position="238"/>
    </location>
</feature>
<feature type="glycosylation site" description="N-linked (GlcNAc...) asparagine; by host" evidence="2">
    <location>
        <position position="262"/>
    </location>
</feature>
<feature type="glycosylation site" description="N-linked (GlcNAc...) asparagine; by host" evidence="2">
    <location>
        <position position="268"/>
    </location>
</feature>
<feature type="glycosylation site" description="N-linked (GlcNAc...) asparagine; by host" evidence="2">
    <location>
        <position position="279"/>
    </location>
</feature>
<feature type="glycosylation site" description="N-linked (GlcNAc...) asparagine; by host" evidence="2">
    <location>
        <position position="290"/>
    </location>
</feature>
<feature type="glycosylation site" description="N-linked (GlcNAc...) asparagine; by host" evidence="2">
    <location>
        <position position="300"/>
    </location>
</feature>
<feature type="glycosylation site" description="N-linked (GlcNAc...) asparagine; by host" evidence="2">
    <location>
        <position position="355"/>
    </location>
</feature>
<feature type="glycosylation site" description="N-linked (GlcNAc...) asparagine; by host" evidence="2">
    <location>
        <position position="390"/>
    </location>
</feature>
<feature type="glycosylation site" description="N-linked (GlcNAc...) asparagine; by host" evidence="2">
    <location>
        <position position="400"/>
    </location>
</feature>
<feature type="glycosylation site" description="N-linked (GlcNAc...) asparagine; by host" evidence="2">
    <location>
        <position position="440"/>
    </location>
</feature>
<feature type="glycosylation site" description="N-linked (GlcNAc...) asparagine; by host" evidence="2">
    <location>
        <position position="457"/>
    </location>
</feature>
<feature type="glycosylation site" description="N-linked (GlcNAc...) asparagine; by host" evidence="2">
    <location>
        <position position="602"/>
    </location>
</feature>
<feature type="glycosylation site" description="N-linked (GlcNAc...) asparagine; by host" evidence="2">
    <location>
        <position position="611"/>
    </location>
</feature>
<feature type="glycosylation site" description="N-linked (GlcNAc...) asparagine; by host" evidence="2">
    <location>
        <position position="627"/>
    </location>
</feature>
<feature type="disulfide bond" evidence="1">
    <location>
        <begin position="44"/>
        <end position="57"/>
    </location>
</feature>
<feature type="disulfide bond" evidence="1">
    <location>
        <begin position="101"/>
        <end position="204"/>
    </location>
</feature>
<feature type="disulfide bond" evidence="1">
    <location>
        <begin position="108"/>
        <end position="195"/>
    </location>
</feature>
<feature type="disulfide bond" evidence="1">
    <location>
        <begin position="113"/>
        <end position="154"/>
    </location>
</feature>
<feature type="disulfide bond" evidence="1">
    <location>
        <begin position="217"/>
        <end position="247"/>
    </location>
</feature>
<feature type="disulfide bond" evidence="1">
    <location>
        <begin position="227"/>
        <end position="239"/>
    </location>
</feature>
<feature type="disulfide bond" evidence="1">
    <location>
        <begin position="295"/>
        <end position="329"/>
    </location>
</feature>
<feature type="disulfide bond" evidence="1">
    <location>
        <begin position="382"/>
        <end position="439"/>
    </location>
</feature>
<feature type="disulfide bond" evidence="1">
    <location>
        <begin position="389"/>
        <end position="412"/>
    </location>
</feature>
<gene>
    <name type="primary">env</name>
</gene>
<evidence type="ECO:0000250" key="1"/>
<evidence type="ECO:0000255" key="2"/>
<evidence type="ECO:0000305" key="3"/>
<proteinExistence type="evidence at protein level"/>
<comment type="function">
    <text evidence="1">The surface protein gp120 (SU) attaches the virus to the host lymphoid cell by binding to the primary receptor CD4. This interaction induces a structural rearrangement creating a high affinity binding site for a chemokine coreceptor like CXCR4 and/or CCR5. This peculiar 2 stage receptor-interaction strategy allows gp120 to maintain the highly conserved coreceptor-binding site in a cryptic conformation, protected from neutralizing antibodies. Since CD4 also displays a binding site for the disulfide-isomerase P4HB/PDI, a P4HB/PDI-CD4-CXCR4-gp120 complex may form. In that complex, P4HB/PDI could reach and reduce gp120 disulfide bonds, causing major conformational changes in gp120. TXN, another PDI family member could also be involved in disulfide rearrangements in Env during fusion. These changes are transmitted to the transmembrane protein gp41 and are thought to activate its fusogenic potential by unmasking its fusion peptide (By similarity).</text>
</comment>
<comment type="function">
    <text evidence="1">The surface protein gp120 is a ligand for CD209/DC-SIGN and CLEC4M/DC-SIGNR, which are respectively found on dendritic cells (DCs), and on endothelial cells of liver sinusoids and lymph node sinuses. These interactions allow capture of viral particles at mucosal surfaces by these cells and subsequent transmission to permissive cells. DCs are professional antigen presenting cells, critical for host immunity by inducing specific immune responses against a broad variety of pathogens. They act as sentinels in various tissues where they take up antigen, process it, and present it to T-cells following migration to lymphoid organs. HIV subverts the migration properties of dendritic cells to gain access to CD4+ T-cells in lymph nodes. Virus transmission to permissive T-cells occurs either in trans (without DCs infection, through viral capture and transmission), or in cis (following DCs productive infection, through the usual CD4-gp120 interaction), thereby inducing a robust infection. In trans infection, bound virions remain infectious over days and it is proposed that they are not degraded, but protected in non-lysosomal acidic organelles within the DCs close to the cell membrane thus contributing to the viral infectious potential during DCs' migration from the periphery to the lymphoid tissues. On arrival at lymphoid tissues, intact virions recycle back to DCs' cell surface allowing virus transmission to CD4+ T-cells. Virion capture also seems to lead to MHC-II-restricted viral antigen presentation, and probably to the activation of HIV-specific CD4+ cells (By similarity).</text>
</comment>
<comment type="function">
    <text evidence="1">The transmembrane protein gp41 (TM) acts as a class I viral fusion protein. Under the current model, the protein has at least 3 conformational states: pre-fusion native state, pre-hairpin intermediate state, and post-fusion hairpin state. During fusion of viral and target intracellular membranes, the coiled coil regions (heptad repeats) assume a trimer-of-hairpins structure, positioning the fusion peptide in close proximity to the C-terminal region of the ectodomain. The formation of this structure appears to drive apposition and subsequent fusion of viral and target cell membranes. Complete fusion occurs in host cell endosomes and is dynamin-dependent, however some lipid transfer might occur at the plasma membrane. The virus undergoes clathrin-dependent internalization long before endosomal fusion, thus minimizing the surface exposure of conserved viral epitopes during fusion and reducing the efficacy of inhibitors targeting these epitopes. Membranes fusion leads to delivery of the nucleocapsid into the cytoplasm (By similarity).</text>
</comment>
<comment type="function">
    <text evidence="1">The envelope glycoprotein gp160 precursor down-modulates cell surface CD4 antigen by interacting with it in the endoplasmic reticulum and blocking its transport to the cell surface.</text>
</comment>
<comment type="function">
    <text evidence="1">The gp120-gp41 heterodimer seems to contribute to T-cell depletion during HIV-1 infection. The envelope glycoproteins expressed on the surface of infected cells induce apoptosis through an interaction with uninfected cells expressing the receptor (CD4) and the coreceptors CXCR4 or CCR5. This type of bystander killing may be obtained by at least three distinct mechanisms. First, the interaction between the 2 cells can induce cellular fusion followed by nuclear fusion within the syncytium. Syncytia are condemned to die from apoptosis. Second, the 2 interacting cells may not fuse entirely and simply exchange plasma membrane lipids, after a sort of hemifusion process, followed by rapid death. Third, it is possible that virus-infected cells, on the point of undergoing apoptosis, fuse with CD4-expressing cells, in which case apoptosis is rapidly transmitted from one cell to the other and thus occurs in a sort of contagious fashion (By similarity).</text>
</comment>
<comment type="function">
    <text evidence="1">The gp120-gp41 heterodimer allows rapid transcytosis of the virus through CD4 negative cells such as simple epithelial monolayers of the intestinal, rectal and endocervical epithelial barriers. Both gp120 and gp41 specifically recognize glycosphingolipids galactosyl-ceramide (GalCer) or 3' sulfo-galactosyl-ceramide (GalS) present in the lipid rafts structures of epithelial cells. Binding to these alternative receptors allows the rapid transcytosis of the virus through the epithelial cells. This transcytotic vesicle-mediated transport of virions from the apical side to the basolateral side of the epithelial cells does not involve infection of the cells themselves (By similarity).</text>
</comment>
<comment type="subunit">
    <molecule>Surface protein gp120</molecule>
    <text evidence="1">The mature envelope protein (Env) consists of a homotrimer of non-covalently associated gp120-gp41 heterodimers. The resulting complex protrudes from the virus surface as a spike. There seems to be as few as 10 spikes on the average virion. Interacts with human CD4, CCR5 and CXCR4, to form a P4HB/PDI-CD4-CXCR4-gp120 complex. Gp120 also interacts with the C-type lectins CD209/DC-SIGN and CLEC4M/DC-SIGNR (collectively referred to as DC-SIGN(R)). Gp120 and gp41 interact with GalCer (By similarity).</text>
</comment>
<comment type="subunit">
    <molecule>Transmembrane protein gp41</molecule>
    <text evidence="1">The mature envelope protein (Env) consists of a homotrimer of non-covalently associated gp120-gp41 heterodimers. The resulting complex protrudes from the virus surface as a spike. There seems to be as few as 10 spikes on the average virion.</text>
</comment>
<comment type="subcellular location">
    <molecule>Transmembrane protein gp41</molecule>
    <subcellularLocation>
        <location evidence="1">Virion membrane</location>
        <topology evidence="1">Single-pass type I membrane protein</topology>
    </subcellularLocation>
    <subcellularLocation>
        <location evidence="1">Host cell membrane</location>
        <topology evidence="1">Single-pass type I membrane protein</topology>
    </subcellularLocation>
    <subcellularLocation>
        <location evidence="3">Host endosome membrane</location>
        <topology evidence="3">Single-pass type I membrane protein</topology>
    </subcellularLocation>
    <text evidence="1">It is probably concentrated at the site of budding and incorporated into the virions possibly by contacts between the cytoplasmic tail of Env and the N-terminus of Gag.</text>
</comment>
<comment type="subcellular location">
    <molecule>Surface protein gp120</molecule>
    <subcellularLocation>
        <location evidence="1">Virion membrane</location>
        <topology evidence="1">Peripheral membrane protein</topology>
    </subcellularLocation>
    <subcellularLocation>
        <location evidence="1">Host cell membrane</location>
        <topology evidence="1">Peripheral membrane protein</topology>
    </subcellularLocation>
    <subcellularLocation>
        <location evidence="3">Host endosome membrane</location>
        <topology evidence="3">Peripheral membrane protein</topology>
    </subcellularLocation>
    <text evidence="1">The surface protein is not anchored to the viral envelope, but associates with the extravirion surface through its binding to TM. It is probably concentrated at the site of budding and incorporated into the virions possibly by contacts between the cytoplasmic tail of Env and the N-terminus of Gag (By similarity).</text>
</comment>
<comment type="domain">
    <text evidence="1">Some of the most genetically diverse regions of the viral genome are present in Env. They are called variable regions 1 through 5 (V1 through V5). Coreceptor usage of gp120 is determined mainly by the primary structure of the third variable region (V3) in the outer domain of gp120. Binding to CCR5 involves a region adjacent in addition to V3 (By similarity).</text>
</comment>
<comment type="domain">
    <text evidence="1">The 17 amino acids long immunosuppressive region is present in many retroviral envelope proteins. Synthetic peptides derived from this relatively conserved sequence inhibit immune function in vitro and in vivo (By similarity).</text>
</comment>
<comment type="PTM">
    <text evidence="1">Specific enzymatic cleavages in vivo yield mature proteins. Envelope glycoproteins are synthesized as an inactive precursor that is heavily N-glycosylated and processed likely by host cell furin in the Golgi to yield the mature SU and TM proteins. The cleavage site between SU and TM requires the minimal sequence [KR]-X-[KR]-R (By similarity).</text>
</comment>
<comment type="PTM">
    <text evidence="1">Palmitoylation of the transmembrane protein and of Env polyprotein (prior to its proteolytic cleavage) is essential for their association with host cell membrane lipid rafts. Palmitoylation is therefore required for envelope trafficking to classical lipid rafts, but not for viral replication (By similarity).</text>
</comment>
<comment type="miscellaneous">
    <text>Some HIV-2 isolates have been described that can infect cells independently of CD4, using CXCR4 as primary receptor. These isolates may have an exposed coreceptor binding site.</text>
</comment>
<comment type="caution">
    <text evidence="3">The cleavage site does not match the consensus used by furin.</text>
</comment>
<name>ENV_HV2NZ</name>
<organismHost>
    <name type="scientific">Homo sapiens</name>
    <name type="common">Human</name>
    <dbReference type="NCBI Taxonomy" id="9606"/>
</organismHost>
<keyword id="KW-0014">AIDS</keyword>
<keyword id="KW-0053">Apoptosis</keyword>
<keyword id="KW-1165">Clathrin-mediated endocytosis of virus by host</keyword>
<keyword id="KW-0165">Cleavage on pair of basic residues</keyword>
<keyword id="KW-0175">Coiled coil</keyword>
<keyword id="KW-1015">Disulfide bond</keyword>
<keyword id="KW-1170">Fusion of virus membrane with host endosomal membrane</keyword>
<keyword id="KW-1168">Fusion of virus membrane with host membrane</keyword>
<keyword id="KW-0325">Glycoprotein</keyword>
<keyword id="KW-1032">Host cell membrane</keyword>
<keyword id="KW-1039">Host endosome</keyword>
<keyword id="KW-1043">Host membrane</keyword>
<keyword id="KW-0945">Host-virus interaction</keyword>
<keyword id="KW-1090">Inhibition of host innate immune response by virus</keyword>
<keyword id="KW-1084">Inhibition of host tetherin by virus</keyword>
<keyword id="KW-0449">Lipoprotein</keyword>
<keyword id="KW-0472">Membrane</keyword>
<keyword id="KW-0564">Palmitate</keyword>
<keyword id="KW-0732">Signal</keyword>
<keyword id="KW-0812">Transmembrane</keyword>
<keyword id="KW-1133">Transmembrane helix</keyword>
<keyword id="KW-1161">Viral attachment to host cell</keyword>
<keyword id="KW-0261">Viral envelope protein</keyword>
<keyword id="KW-0899">Viral immunoevasion</keyword>
<keyword id="KW-1162">Viral penetration into host cytoplasm</keyword>
<keyword id="KW-0946">Virion</keyword>
<keyword id="KW-1164">Virus endocytosis by host</keyword>
<keyword id="KW-1160">Virus entry into host cell</keyword>
<accession>P05883</accession>